<name>RS7_DESDA</name>
<dbReference type="EMBL" id="CP001358">
    <property type="protein sequence ID" value="ACL49966.1"/>
    <property type="molecule type" value="Genomic_DNA"/>
</dbReference>
<dbReference type="SMR" id="B8J3F6"/>
<dbReference type="STRING" id="525146.Ddes_2070"/>
<dbReference type="KEGG" id="dds:Ddes_2070"/>
<dbReference type="eggNOG" id="COG0049">
    <property type="taxonomic scope" value="Bacteria"/>
</dbReference>
<dbReference type="HOGENOM" id="CLU_072226_1_1_7"/>
<dbReference type="GO" id="GO:0015935">
    <property type="term" value="C:small ribosomal subunit"/>
    <property type="evidence" value="ECO:0007669"/>
    <property type="project" value="InterPro"/>
</dbReference>
<dbReference type="GO" id="GO:0019843">
    <property type="term" value="F:rRNA binding"/>
    <property type="evidence" value="ECO:0007669"/>
    <property type="project" value="UniProtKB-UniRule"/>
</dbReference>
<dbReference type="GO" id="GO:0003735">
    <property type="term" value="F:structural constituent of ribosome"/>
    <property type="evidence" value="ECO:0007669"/>
    <property type="project" value="InterPro"/>
</dbReference>
<dbReference type="GO" id="GO:0000049">
    <property type="term" value="F:tRNA binding"/>
    <property type="evidence" value="ECO:0007669"/>
    <property type="project" value="UniProtKB-UniRule"/>
</dbReference>
<dbReference type="GO" id="GO:0006412">
    <property type="term" value="P:translation"/>
    <property type="evidence" value="ECO:0007669"/>
    <property type="project" value="UniProtKB-UniRule"/>
</dbReference>
<dbReference type="CDD" id="cd14869">
    <property type="entry name" value="uS7_Bacteria"/>
    <property type="match status" value="1"/>
</dbReference>
<dbReference type="FunFam" id="1.10.455.10:FF:000001">
    <property type="entry name" value="30S ribosomal protein S7"/>
    <property type="match status" value="1"/>
</dbReference>
<dbReference type="Gene3D" id="1.10.455.10">
    <property type="entry name" value="Ribosomal protein S7 domain"/>
    <property type="match status" value="1"/>
</dbReference>
<dbReference type="HAMAP" id="MF_00480_B">
    <property type="entry name" value="Ribosomal_uS7_B"/>
    <property type="match status" value="1"/>
</dbReference>
<dbReference type="InterPro" id="IPR000235">
    <property type="entry name" value="Ribosomal_uS7"/>
</dbReference>
<dbReference type="InterPro" id="IPR005717">
    <property type="entry name" value="Ribosomal_uS7_bac/org-type"/>
</dbReference>
<dbReference type="InterPro" id="IPR020606">
    <property type="entry name" value="Ribosomal_uS7_CS"/>
</dbReference>
<dbReference type="InterPro" id="IPR023798">
    <property type="entry name" value="Ribosomal_uS7_dom"/>
</dbReference>
<dbReference type="InterPro" id="IPR036823">
    <property type="entry name" value="Ribosomal_uS7_dom_sf"/>
</dbReference>
<dbReference type="NCBIfam" id="TIGR01029">
    <property type="entry name" value="rpsG_bact"/>
    <property type="match status" value="1"/>
</dbReference>
<dbReference type="PANTHER" id="PTHR11205">
    <property type="entry name" value="RIBOSOMAL PROTEIN S7"/>
    <property type="match status" value="1"/>
</dbReference>
<dbReference type="Pfam" id="PF00177">
    <property type="entry name" value="Ribosomal_S7"/>
    <property type="match status" value="1"/>
</dbReference>
<dbReference type="PIRSF" id="PIRSF002122">
    <property type="entry name" value="RPS7p_RPS7a_RPS5e_RPS7o"/>
    <property type="match status" value="1"/>
</dbReference>
<dbReference type="SUPFAM" id="SSF47973">
    <property type="entry name" value="Ribosomal protein S7"/>
    <property type="match status" value="1"/>
</dbReference>
<dbReference type="PROSITE" id="PS00052">
    <property type="entry name" value="RIBOSOMAL_S7"/>
    <property type="match status" value="1"/>
</dbReference>
<reference key="1">
    <citation type="submission" date="2009-01" db="EMBL/GenBank/DDBJ databases">
        <title>Complete sequence of Desulfovibrio desulfuricans subsp. desulfuricans str. ATCC 27774.</title>
        <authorList>
            <consortium name="US DOE Joint Genome Institute"/>
            <person name="Lucas S."/>
            <person name="Copeland A."/>
            <person name="Lapidus A."/>
            <person name="Glavina del Rio T."/>
            <person name="Tice H."/>
            <person name="Bruce D."/>
            <person name="Goodwin L."/>
            <person name="Pitluck S."/>
            <person name="Sims D."/>
            <person name="Lu M."/>
            <person name="Kiss H."/>
            <person name="Meineke L."/>
            <person name="Brettin T."/>
            <person name="Detter J.C."/>
            <person name="Han C."/>
            <person name="Larimer F."/>
            <person name="Land M."/>
            <person name="Hauser L."/>
            <person name="Kyrpides N."/>
            <person name="Ovchinnikova G."/>
            <person name="Hazen T.C."/>
        </authorList>
    </citation>
    <scope>NUCLEOTIDE SEQUENCE [LARGE SCALE GENOMIC DNA]</scope>
    <source>
        <strain>ATCC 27774 / DSM 6949 / MB</strain>
    </source>
</reference>
<proteinExistence type="inferred from homology"/>
<evidence type="ECO:0000255" key="1">
    <source>
        <dbReference type="HAMAP-Rule" id="MF_00480"/>
    </source>
</evidence>
<evidence type="ECO:0000305" key="2"/>
<protein>
    <recommendedName>
        <fullName evidence="1">Small ribosomal subunit protein uS7</fullName>
    </recommendedName>
    <alternativeName>
        <fullName evidence="2">30S ribosomal protein S7</fullName>
    </alternativeName>
</protein>
<keyword id="KW-0687">Ribonucleoprotein</keyword>
<keyword id="KW-0689">Ribosomal protein</keyword>
<keyword id="KW-0694">RNA-binding</keyword>
<keyword id="KW-0699">rRNA-binding</keyword>
<keyword id="KW-0820">tRNA-binding</keyword>
<comment type="function">
    <text evidence="1">One of the primary rRNA binding proteins, it binds directly to 16S rRNA where it nucleates assembly of the head domain of the 30S subunit. Is located at the subunit interface close to the decoding center, probably blocks exit of the E-site tRNA.</text>
</comment>
<comment type="subunit">
    <text evidence="1">Part of the 30S ribosomal subunit. Contacts proteins S9 and S11.</text>
</comment>
<comment type="similarity">
    <text evidence="1">Belongs to the universal ribosomal protein uS7 family.</text>
</comment>
<organism>
    <name type="scientific">Desulfovibrio desulfuricans (strain ATCC 27774 / DSM 6949 / MB)</name>
    <dbReference type="NCBI Taxonomy" id="525146"/>
    <lineage>
        <taxon>Bacteria</taxon>
        <taxon>Pseudomonadati</taxon>
        <taxon>Thermodesulfobacteriota</taxon>
        <taxon>Desulfovibrionia</taxon>
        <taxon>Desulfovibrionales</taxon>
        <taxon>Desulfovibrionaceae</taxon>
        <taxon>Desulfovibrio</taxon>
    </lineage>
</organism>
<sequence length="156" mass="17849">MPRKGPVPKREVLPDPIYSSRLITKFVNRLMYDGKKGAAEKIFYSSLEHLAEKTGEEPMRAFEKALDNVKPHMEVKARRVGGATYQVPMEVRPERQVSLSIRWLINYARSRGEKGMTAKLSAELLDAFNGRGGAVKKREDTHRMADANKAFSHYRW</sequence>
<feature type="chain" id="PRO_1000135598" description="Small ribosomal subunit protein uS7">
    <location>
        <begin position="1"/>
        <end position="156"/>
    </location>
</feature>
<gene>
    <name evidence="1" type="primary">rpsG</name>
    <name type="ordered locus">Ddes_2070</name>
</gene>
<accession>B8J3F6</accession>